<gene>
    <name type="primary">TMEM53</name>
    <name type="synonym">NET4</name>
</gene>
<comment type="function">
    <text evidence="2">Ensures normal bone formation, through the negative regulation of bone morphogenetic protein (BMP) signaling in osteoblast lineage cells by blocking cytoplasm-nucleus translocation of phosphorylated SMAD1/5/9 proteins.</text>
</comment>
<comment type="subcellular location">
    <subcellularLocation>
        <location evidence="2">Nucleus outer membrane</location>
        <topology evidence="6">Single-pass membrane protein</topology>
    </subcellularLocation>
</comment>
<comment type="alternative products">
    <event type="alternative splicing"/>
    <isoform>
        <id>Q6P2H8-1</id>
        <name>1</name>
        <name evidence="5">T.1</name>
        <sequence type="displayed"/>
    </isoform>
    <isoform>
        <id>Q6P2H8-2</id>
        <name>2</name>
        <name evidence="5">T.2</name>
        <sequence type="described" ref="VSP_024446"/>
    </isoform>
</comment>
<comment type="tissue specificity">
    <molecule>Isoform 1</molecule>
    <text evidence="2">Widely expressed.</text>
</comment>
<comment type="disease" evidence="2">
    <disease id="DI-06325">
        <name>Craniotubular dysplasia, Ikegawa type</name>
        <acronym>CTDI</acronym>
        <description>An autosomal recessive, sclerosing bone disorder characterized by proportional or short-limbed short stature in association with macrocephaly, dolichocephaly, or prominent forehead. Radiography shows hyperostosis of the calvaria and skull base, with metadiaphyseal undermodeling of the long tubular bones and mild shortening and diaphyseal broadening of the short tubular bones. Affected individuals experience progressive vision loss in the first decade of life due to optic nerve compression, and deafness may develop in the second decade of life.</description>
        <dbReference type="MIM" id="619727"/>
    </disease>
    <text>The disease is caused by variants affecting the gene represented in this entry.</text>
</comment>
<comment type="similarity">
    <text evidence="6">Belongs to the TMEM53 family.</text>
</comment>
<keyword id="KW-0025">Alternative splicing</keyword>
<keyword id="KW-0217">Developmental protein</keyword>
<keyword id="KW-0242">Dwarfism</keyword>
<keyword id="KW-0472">Membrane</keyword>
<keyword id="KW-0539">Nucleus</keyword>
<keyword id="KW-1267">Proteomics identification</keyword>
<keyword id="KW-1185">Reference proteome</keyword>
<keyword id="KW-0812">Transmembrane</keyword>
<keyword id="KW-1133">Transmembrane helix</keyword>
<dbReference type="EMBL" id="AK026006">
    <property type="protein sequence ID" value="BAB15317.1"/>
    <property type="molecule type" value="mRNA"/>
</dbReference>
<dbReference type="EMBL" id="AK296548">
    <property type="protein sequence ID" value="BAG59172.1"/>
    <property type="molecule type" value="mRNA"/>
</dbReference>
<dbReference type="EMBL" id="CR457348">
    <property type="protein sequence ID" value="CAG33629.1"/>
    <property type="molecule type" value="mRNA"/>
</dbReference>
<dbReference type="EMBL" id="AL832539">
    <property type="protein sequence ID" value="CAI46125.1"/>
    <property type="molecule type" value="mRNA"/>
</dbReference>
<dbReference type="EMBL" id="AL122004">
    <property type="status" value="NOT_ANNOTATED_CDS"/>
    <property type="molecule type" value="Genomic_DNA"/>
</dbReference>
<dbReference type="EMBL" id="CH471059">
    <property type="protein sequence ID" value="EAX07029.1"/>
    <property type="molecule type" value="Genomic_DNA"/>
</dbReference>
<dbReference type="EMBL" id="BC064520">
    <property type="protein sequence ID" value="AAH64520.1"/>
    <property type="molecule type" value="mRNA"/>
</dbReference>
<dbReference type="CCDS" id="CCDS511.1">
    <molecule id="Q6P2H8-1"/>
</dbReference>
<dbReference type="RefSeq" id="NP_001287675.1">
    <molecule id="Q6P2H8-2"/>
    <property type="nucleotide sequence ID" value="NM_001300746.2"/>
</dbReference>
<dbReference type="RefSeq" id="NP_001287676.1">
    <property type="nucleotide sequence ID" value="NM_001300747.1"/>
</dbReference>
<dbReference type="RefSeq" id="NP_001287677.1">
    <property type="nucleotide sequence ID" value="NM_001300748.1"/>
</dbReference>
<dbReference type="RefSeq" id="NP_078863.2">
    <molecule id="Q6P2H8-1"/>
    <property type="nucleotide sequence ID" value="NM_024587.3"/>
</dbReference>
<dbReference type="BioGRID" id="122767">
    <property type="interactions" value="18"/>
</dbReference>
<dbReference type="FunCoup" id="Q6P2H8">
    <property type="interactions" value="842"/>
</dbReference>
<dbReference type="IntAct" id="Q6P2H8">
    <property type="interactions" value="8"/>
</dbReference>
<dbReference type="STRING" id="9606.ENSP00000361311"/>
<dbReference type="ESTHER" id="human-TMEM53">
    <property type="family name" value="Duf_829"/>
</dbReference>
<dbReference type="iPTMnet" id="Q6P2H8"/>
<dbReference type="PhosphoSitePlus" id="Q6P2H8"/>
<dbReference type="BioMuta" id="TMEM53"/>
<dbReference type="DMDM" id="74758243"/>
<dbReference type="jPOST" id="Q6P2H8"/>
<dbReference type="MassIVE" id="Q6P2H8"/>
<dbReference type="PaxDb" id="9606-ENSP00000361311"/>
<dbReference type="PeptideAtlas" id="Q6P2H8"/>
<dbReference type="ProteomicsDB" id="66904">
    <molecule id="Q6P2H8-1"/>
</dbReference>
<dbReference type="ProteomicsDB" id="66905">
    <molecule id="Q6P2H8-2"/>
</dbReference>
<dbReference type="Antibodypedia" id="18471">
    <property type="antibodies" value="49 antibodies from 12 providers"/>
</dbReference>
<dbReference type="DNASU" id="79639"/>
<dbReference type="Ensembl" id="ENST00000372237.8">
    <molecule id="Q6P2H8-1"/>
    <property type="protein sequence ID" value="ENSP00000361311.3"/>
    <property type="gene ID" value="ENSG00000126106.14"/>
</dbReference>
<dbReference type="GeneID" id="79639"/>
<dbReference type="KEGG" id="hsa:79639"/>
<dbReference type="MANE-Select" id="ENST00000372237.8">
    <property type="protein sequence ID" value="ENSP00000361311.3"/>
    <property type="RefSeq nucleotide sequence ID" value="NM_024587.4"/>
    <property type="RefSeq protein sequence ID" value="NP_078863.2"/>
</dbReference>
<dbReference type="UCSC" id="uc001cmc.4">
    <molecule id="Q6P2H8-1"/>
    <property type="organism name" value="human"/>
</dbReference>
<dbReference type="AGR" id="HGNC:26186"/>
<dbReference type="CTD" id="79639"/>
<dbReference type="DisGeNET" id="79639"/>
<dbReference type="GeneCards" id="TMEM53"/>
<dbReference type="HGNC" id="HGNC:26186">
    <property type="gene designation" value="TMEM53"/>
</dbReference>
<dbReference type="HPA" id="ENSG00000126106">
    <property type="expression patterns" value="Tissue enhanced (liver)"/>
</dbReference>
<dbReference type="MalaCards" id="TMEM53"/>
<dbReference type="MIM" id="619722">
    <property type="type" value="gene"/>
</dbReference>
<dbReference type="MIM" id="619727">
    <property type="type" value="phenotype"/>
</dbReference>
<dbReference type="neXtProt" id="NX_Q6P2H8"/>
<dbReference type="OpenTargets" id="ENSG00000126106"/>
<dbReference type="PharmGKB" id="PA142670769"/>
<dbReference type="VEuPathDB" id="HostDB:ENSG00000126106"/>
<dbReference type="eggNOG" id="KOG2521">
    <property type="taxonomic scope" value="Eukaryota"/>
</dbReference>
<dbReference type="GeneTree" id="ENSGT00390000000715"/>
<dbReference type="HOGENOM" id="CLU_036503_1_0_1"/>
<dbReference type="InParanoid" id="Q6P2H8"/>
<dbReference type="OMA" id="VECLFWR"/>
<dbReference type="OrthoDB" id="77878at2759"/>
<dbReference type="PAN-GO" id="Q6P2H8">
    <property type="GO annotations" value="0 GO annotations based on evolutionary models"/>
</dbReference>
<dbReference type="PhylomeDB" id="Q6P2H8"/>
<dbReference type="TreeFam" id="TF313176"/>
<dbReference type="PathwayCommons" id="Q6P2H8"/>
<dbReference type="SignaLink" id="Q6P2H8"/>
<dbReference type="BioGRID-ORCS" id="79639">
    <property type="hits" value="42 hits in 1153 CRISPR screens"/>
</dbReference>
<dbReference type="ChiTaRS" id="TMEM53">
    <property type="organism name" value="human"/>
</dbReference>
<dbReference type="GenomeRNAi" id="79639"/>
<dbReference type="Pharos" id="Q6P2H8">
    <property type="development level" value="Tdark"/>
</dbReference>
<dbReference type="PRO" id="PR:Q6P2H8"/>
<dbReference type="Proteomes" id="UP000005640">
    <property type="component" value="Chromosome 1"/>
</dbReference>
<dbReference type="RNAct" id="Q6P2H8">
    <property type="molecule type" value="protein"/>
</dbReference>
<dbReference type="Bgee" id="ENSG00000126106">
    <property type="expression patterns" value="Expressed in right lobe of liver and 137 other cell types or tissues"/>
</dbReference>
<dbReference type="ExpressionAtlas" id="Q6P2H8">
    <property type="expression patterns" value="baseline and differential"/>
</dbReference>
<dbReference type="GO" id="GO:0031965">
    <property type="term" value="C:nuclear membrane"/>
    <property type="evidence" value="ECO:0000314"/>
    <property type="project" value="UniProtKB"/>
</dbReference>
<dbReference type="GO" id="GO:0005640">
    <property type="term" value="C:nuclear outer membrane"/>
    <property type="evidence" value="ECO:0000250"/>
    <property type="project" value="UniProtKB"/>
</dbReference>
<dbReference type="GO" id="GO:0005634">
    <property type="term" value="C:nucleus"/>
    <property type="evidence" value="ECO:0007005"/>
    <property type="project" value="UniProtKB"/>
</dbReference>
<dbReference type="GO" id="GO:0030514">
    <property type="term" value="P:negative regulation of BMP signaling pathway"/>
    <property type="evidence" value="ECO:0000315"/>
    <property type="project" value="UniProtKB"/>
</dbReference>
<dbReference type="GO" id="GO:0030279">
    <property type="term" value="P:negative regulation of ossification"/>
    <property type="evidence" value="ECO:0000315"/>
    <property type="project" value="UniProtKB"/>
</dbReference>
<dbReference type="GO" id="GO:0045668">
    <property type="term" value="P:negative regulation of osteoblast differentiation"/>
    <property type="evidence" value="ECO:0000250"/>
    <property type="project" value="UniProtKB"/>
</dbReference>
<dbReference type="GO" id="GO:0046822">
    <property type="term" value="P:regulation of nucleocytoplasmic transport"/>
    <property type="evidence" value="ECO:0000315"/>
    <property type="project" value="UniProtKB"/>
</dbReference>
<dbReference type="Gene3D" id="3.40.50.1820">
    <property type="entry name" value="alpha/beta hydrolase"/>
    <property type="match status" value="1"/>
</dbReference>
<dbReference type="InterPro" id="IPR029058">
    <property type="entry name" value="AB_hydrolase_fold"/>
</dbReference>
<dbReference type="InterPro" id="IPR008547">
    <property type="entry name" value="DUF829_TMEM53"/>
</dbReference>
<dbReference type="PANTHER" id="PTHR12265">
    <property type="entry name" value="TRANSMEMBRANE PROTEIN 53"/>
    <property type="match status" value="1"/>
</dbReference>
<dbReference type="PANTHER" id="PTHR12265:SF30">
    <property type="entry name" value="TRANSMEMBRANE PROTEIN 53"/>
    <property type="match status" value="1"/>
</dbReference>
<dbReference type="Pfam" id="PF05705">
    <property type="entry name" value="DUF829"/>
    <property type="match status" value="1"/>
</dbReference>
<dbReference type="SUPFAM" id="SSF53474">
    <property type="entry name" value="alpha/beta-Hydrolases"/>
    <property type="match status" value="1"/>
</dbReference>
<organism>
    <name type="scientific">Homo sapiens</name>
    <name type="common">Human</name>
    <dbReference type="NCBI Taxonomy" id="9606"/>
    <lineage>
        <taxon>Eukaryota</taxon>
        <taxon>Metazoa</taxon>
        <taxon>Chordata</taxon>
        <taxon>Craniata</taxon>
        <taxon>Vertebrata</taxon>
        <taxon>Euteleostomi</taxon>
        <taxon>Mammalia</taxon>
        <taxon>Eutheria</taxon>
        <taxon>Euarchontoglires</taxon>
        <taxon>Primates</taxon>
        <taxon>Haplorrhini</taxon>
        <taxon>Catarrhini</taxon>
        <taxon>Hominidae</taxon>
        <taxon>Homo</taxon>
    </lineage>
</organism>
<sequence length="277" mass="31630">MASAELDYTIEIPDQPCWSQKNSPSPGGKEAETRQPVVILLGWGGCKDKNLAKYSAIYHKRGCIVIRYTAPWHMVFFSESLGIPSLRVLAQKLLELLFDYEIEKEPLLFHVFSNGGVMLYRYVLELLQTRRFCRLRVVGTIFDSAPGDSNLVGALRALAAILERRAAMLRLLLLVAFALVVVLFHVLLAPITALFHTHFYDRLQDAGSRWPELYLYSRADEVVLARDIERMVEARLARRVLARSVDFVSSAHVSHLRDYPTYYTSLCVDFMRNCVRC</sequence>
<evidence type="ECO:0000255" key="1"/>
<evidence type="ECO:0000269" key="2">
    <source>
    </source>
</evidence>
<evidence type="ECO:0000303" key="3">
    <source>
    </source>
</evidence>
<evidence type="ECO:0000303" key="4">
    <source>
    </source>
</evidence>
<evidence type="ECO:0000303" key="5">
    <source>
    </source>
</evidence>
<evidence type="ECO:0000305" key="6"/>
<reference key="1">
    <citation type="journal article" date="2004" name="Nat. Genet.">
        <title>Complete sequencing and characterization of 21,243 full-length human cDNAs.</title>
        <authorList>
            <person name="Ota T."/>
            <person name="Suzuki Y."/>
            <person name="Nishikawa T."/>
            <person name="Otsuki T."/>
            <person name="Sugiyama T."/>
            <person name="Irie R."/>
            <person name="Wakamatsu A."/>
            <person name="Hayashi K."/>
            <person name="Sato H."/>
            <person name="Nagai K."/>
            <person name="Kimura K."/>
            <person name="Makita H."/>
            <person name="Sekine M."/>
            <person name="Obayashi M."/>
            <person name="Nishi T."/>
            <person name="Shibahara T."/>
            <person name="Tanaka T."/>
            <person name="Ishii S."/>
            <person name="Yamamoto J."/>
            <person name="Saito K."/>
            <person name="Kawai Y."/>
            <person name="Isono Y."/>
            <person name="Nakamura Y."/>
            <person name="Nagahari K."/>
            <person name="Murakami K."/>
            <person name="Yasuda T."/>
            <person name="Iwayanagi T."/>
            <person name="Wagatsuma M."/>
            <person name="Shiratori A."/>
            <person name="Sudo H."/>
            <person name="Hosoiri T."/>
            <person name="Kaku Y."/>
            <person name="Kodaira H."/>
            <person name="Kondo H."/>
            <person name="Sugawara M."/>
            <person name="Takahashi M."/>
            <person name="Kanda K."/>
            <person name="Yokoi T."/>
            <person name="Furuya T."/>
            <person name="Kikkawa E."/>
            <person name="Omura Y."/>
            <person name="Abe K."/>
            <person name="Kamihara K."/>
            <person name="Katsuta N."/>
            <person name="Sato K."/>
            <person name="Tanikawa M."/>
            <person name="Yamazaki M."/>
            <person name="Ninomiya K."/>
            <person name="Ishibashi T."/>
            <person name="Yamashita H."/>
            <person name="Murakawa K."/>
            <person name="Fujimori K."/>
            <person name="Tanai H."/>
            <person name="Kimata M."/>
            <person name="Watanabe M."/>
            <person name="Hiraoka S."/>
            <person name="Chiba Y."/>
            <person name="Ishida S."/>
            <person name="Ono Y."/>
            <person name="Takiguchi S."/>
            <person name="Watanabe S."/>
            <person name="Yosida M."/>
            <person name="Hotuta T."/>
            <person name="Kusano J."/>
            <person name="Kanehori K."/>
            <person name="Takahashi-Fujii A."/>
            <person name="Hara H."/>
            <person name="Tanase T.-O."/>
            <person name="Nomura Y."/>
            <person name="Togiya S."/>
            <person name="Komai F."/>
            <person name="Hara R."/>
            <person name="Takeuchi K."/>
            <person name="Arita M."/>
            <person name="Imose N."/>
            <person name="Musashino K."/>
            <person name="Yuuki H."/>
            <person name="Oshima A."/>
            <person name="Sasaki N."/>
            <person name="Aotsuka S."/>
            <person name="Yoshikawa Y."/>
            <person name="Matsunawa H."/>
            <person name="Ichihara T."/>
            <person name="Shiohata N."/>
            <person name="Sano S."/>
            <person name="Moriya S."/>
            <person name="Momiyama H."/>
            <person name="Satoh N."/>
            <person name="Takami S."/>
            <person name="Terashima Y."/>
            <person name="Suzuki O."/>
            <person name="Nakagawa S."/>
            <person name="Senoh A."/>
            <person name="Mizoguchi H."/>
            <person name="Goto Y."/>
            <person name="Shimizu F."/>
            <person name="Wakebe H."/>
            <person name="Hishigaki H."/>
            <person name="Watanabe T."/>
            <person name="Sugiyama A."/>
            <person name="Takemoto M."/>
            <person name="Kawakami B."/>
            <person name="Yamazaki M."/>
            <person name="Watanabe K."/>
            <person name="Kumagai A."/>
            <person name="Itakura S."/>
            <person name="Fukuzumi Y."/>
            <person name="Fujimori Y."/>
            <person name="Komiyama M."/>
            <person name="Tashiro H."/>
            <person name="Tanigami A."/>
            <person name="Fujiwara T."/>
            <person name="Ono T."/>
            <person name="Yamada K."/>
            <person name="Fujii Y."/>
            <person name="Ozaki K."/>
            <person name="Hirao M."/>
            <person name="Ohmori Y."/>
            <person name="Kawabata A."/>
            <person name="Hikiji T."/>
            <person name="Kobatake N."/>
            <person name="Inagaki H."/>
            <person name="Ikema Y."/>
            <person name="Okamoto S."/>
            <person name="Okitani R."/>
            <person name="Kawakami T."/>
            <person name="Noguchi S."/>
            <person name="Itoh T."/>
            <person name="Shigeta K."/>
            <person name="Senba T."/>
            <person name="Matsumura K."/>
            <person name="Nakajima Y."/>
            <person name="Mizuno T."/>
            <person name="Morinaga M."/>
            <person name="Sasaki M."/>
            <person name="Togashi T."/>
            <person name="Oyama M."/>
            <person name="Hata H."/>
            <person name="Watanabe M."/>
            <person name="Komatsu T."/>
            <person name="Mizushima-Sugano J."/>
            <person name="Satoh T."/>
            <person name="Shirai Y."/>
            <person name="Takahashi Y."/>
            <person name="Nakagawa K."/>
            <person name="Okumura K."/>
            <person name="Nagase T."/>
            <person name="Nomura N."/>
            <person name="Kikuchi H."/>
            <person name="Masuho Y."/>
            <person name="Yamashita R."/>
            <person name="Nakai K."/>
            <person name="Yada T."/>
            <person name="Nakamura Y."/>
            <person name="Ohara O."/>
            <person name="Isogai T."/>
            <person name="Sugano S."/>
        </authorList>
    </citation>
    <scope>NUCLEOTIDE SEQUENCE [LARGE SCALE MRNA] (ISOFORMS 1 AND 2)</scope>
    <source>
        <tissue>Kidney epithelium</tissue>
        <tissue>Thalamus</tissue>
    </source>
</reference>
<reference key="2">
    <citation type="submission" date="2004-06" db="EMBL/GenBank/DDBJ databases">
        <title>Cloning of human full open reading frames in Gateway(TM) system entry vector (pDONR201).</title>
        <authorList>
            <person name="Ebert L."/>
            <person name="Schick M."/>
            <person name="Neubert P."/>
            <person name="Schatten R."/>
            <person name="Henze S."/>
            <person name="Korn B."/>
        </authorList>
    </citation>
    <scope>NUCLEOTIDE SEQUENCE [LARGE SCALE MRNA] (ISOFORM 1)</scope>
</reference>
<reference key="3">
    <citation type="journal article" date="2007" name="BMC Genomics">
        <title>The full-ORF clone resource of the German cDNA consortium.</title>
        <authorList>
            <person name="Bechtel S."/>
            <person name="Rosenfelder H."/>
            <person name="Duda A."/>
            <person name="Schmidt C.P."/>
            <person name="Ernst U."/>
            <person name="Wellenreuther R."/>
            <person name="Mehrle A."/>
            <person name="Schuster C."/>
            <person name="Bahr A."/>
            <person name="Bloecker H."/>
            <person name="Heubner D."/>
            <person name="Hoerlein A."/>
            <person name="Michel G."/>
            <person name="Wedler H."/>
            <person name="Koehrer K."/>
            <person name="Ottenwaelder B."/>
            <person name="Poustka A."/>
            <person name="Wiemann S."/>
            <person name="Schupp I."/>
        </authorList>
    </citation>
    <scope>NUCLEOTIDE SEQUENCE [LARGE SCALE MRNA] (ISOFORM 2)</scope>
    <source>
        <tissue>Brain</tissue>
    </source>
</reference>
<reference key="4">
    <citation type="journal article" date="2006" name="Nature">
        <title>The DNA sequence and biological annotation of human chromosome 1.</title>
        <authorList>
            <person name="Gregory S.G."/>
            <person name="Barlow K.F."/>
            <person name="McLay K.E."/>
            <person name="Kaul R."/>
            <person name="Swarbreck D."/>
            <person name="Dunham A."/>
            <person name="Scott C.E."/>
            <person name="Howe K.L."/>
            <person name="Woodfine K."/>
            <person name="Spencer C.C.A."/>
            <person name="Jones M.C."/>
            <person name="Gillson C."/>
            <person name="Searle S."/>
            <person name="Zhou Y."/>
            <person name="Kokocinski F."/>
            <person name="McDonald L."/>
            <person name="Evans R."/>
            <person name="Phillips K."/>
            <person name="Atkinson A."/>
            <person name="Cooper R."/>
            <person name="Jones C."/>
            <person name="Hall R.E."/>
            <person name="Andrews T.D."/>
            <person name="Lloyd C."/>
            <person name="Ainscough R."/>
            <person name="Almeida J.P."/>
            <person name="Ambrose K.D."/>
            <person name="Anderson F."/>
            <person name="Andrew R.W."/>
            <person name="Ashwell R.I.S."/>
            <person name="Aubin K."/>
            <person name="Babbage A.K."/>
            <person name="Bagguley C.L."/>
            <person name="Bailey J."/>
            <person name="Beasley H."/>
            <person name="Bethel G."/>
            <person name="Bird C.P."/>
            <person name="Bray-Allen S."/>
            <person name="Brown J.Y."/>
            <person name="Brown A.J."/>
            <person name="Buckley D."/>
            <person name="Burton J."/>
            <person name="Bye J."/>
            <person name="Carder C."/>
            <person name="Chapman J.C."/>
            <person name="Clark S.Y."/>
            <person name="Clarke G."/>
            <person name="Clee C."/>
            <person name="Cobley V."/>
            <person name="Collier R.E."/>
            <person name="Corby N."/>
            <person name="Coville G.J."/>
            <person name="Davies J."/>
            <person name="Deadman R."/>
            <person name="Dunn M."/>
            <person name="Earthrowl M."/>
            <person name="Ellington A.G."/>
            <person name="Errington H."/>
            <person name="Frankish A."/>
            <person name="Frankland J."/>
            <person name="French L."/>
            <person name="Garner P."/>
            <person name="Garnett J."/>
            <person name="Gay L."/>
            <person name="Ghori M.R.J."/>
            <person name="Gibson R."/>
            <person name="Gilby L.M."/>
            <person name="Gillett W."/>
            <person name="Glithero R.J."/>
            <person name="Grafham D.V."/>
            <person name="Griffiths C."/>
            <person name="Griffiths-Jones S."/>
            <person name="Grocock R."/>
            <person name="Hammond S."/>
            <person name="Harrison E.S.I."/>
            <person name="Hart E."/>
            <person name="Haugen E."/>
            <person name="Heath P.D."/>
            <person name="Holmes S."/>
            <person name="Holt K."/>
            <person name="Howden P.J."/>
            <person name="Hunt A.R."/>
            <person name="Hunt S.E."/>
            <person name="Hunter G."/>
            <person name="Isherwood J."/>
            <person name="James R."/>
            <person name="Johnson C."/>
            <person name="Johnson D."/>
            <person name="Joy A."/>
            <person name="Kay M."/>
            <person name="Kershaw J.K."/>
            <person name="Kibukawa M."/>
            <person name="Kimberley A.M."/>
            <person name="King A."/>
            <person name="Knights A.J."/>
            <person name="Lad H."/>
            <person name="Laird G."/>
            <person name="Lawlor S."/>
            <person name="Leongamornlert D.A."/>
            <person name="Lloyd D.M."/>
            <person name="Loveland J."/>
            <person name="Lovell J."/>
            <person name="Lush M.J."/>
            <person name="Lyne R."/>
            <person name="Martin S."/>
            <person name="Mashreghi-Mohammadi M."/>
            <person name="Matthews L."/>
            <person name="Matthews N.S.W."/>
            <person name="McLaren S."/>
            <person name="Milne S."/>
            <person name="Mistry S."/>
            <person name="Moore M.J.F."/>
            <person name="Nickerson T."/>
            <person name="O'Dell C.N."/>
            <person name="Oliver K."/>
            <person name="Palmeiri A."/>
            <person name="Palmer S.A."/>
            <person name="Parker A."/>
            <person name="Patel D."/>
            <person name="Pearce A.V."/>
            <person name="Peck A.I."/>
            <person name="Pelan S."/>
            <person name="Phelps K."/>
            <person name="Phillimore B.J."/>
            <person name="Plumb R."/>
            <person name="Rajan J."/>
            <person name="Raymond C."/>
            <person name="Rouse G."/>
            <person name="Saenphimmachak C."/>
            <person name="Sehra H.K."/>
            <person name="Sheridan E."/>
            <person name="Shownkeen R."/>
            <person name="Sims S."/>
            <person name="Skuce C.D."/>
            <person name="Smith M."/>
            <person name="Steward C."/>
            <person name="Subramanian S."/>
            <person name="Sycamore N."/>
            <person name="Tracey A."/>
            <person name="Tromans A."/>
            <person name="Van Helmond Z."/>
            <person name="Wall M."/>
            <person name="Wallis J.M."/>
            <person name="White S."/>
            <person name="Whitehead S.L."/>
            <person name="Wilkinson J.E."/>
            <person name="Willey D.L."/>
            <person name="Williams H."/>
            <person name="Wilming L."/>
            <person name="Wray P.W."/>
            <person name="Wu Z."/>
            <person name="Coulson A."/>
            <person name="Vaudin M."/>
            <person name="Sulston J.E."/>
            <person name="Durbin R.M."/>
            <person name="Hubbard T."/>
            <person name="Wooster R."/>
            <person name="Dunham I."/>
            <person name="Carter N.P."/>
            <person name="McVean G."/>
            <person name="Ross M.T."/>
            <person name="Harrow J."/>
            <person name="Olson M.V."/>
            <person name="Beck S."/>
            <person name="Rogers J."/>
            <person name="Bentley D.R."/>
        </authorList>
    </citation>
    <scope>NUCLEOTIDE SEQUENCE [LARGE SCALE GENOMIC DNA]</scope>
</reference>
<reference key="5">
    <citation type="submission" date="2005-09" db="EMBL/GenBank/DDBJ databases">
        <authorList>
            <person name="Mural R.J."/>
            <person name="Istrail S."/>
            <person name="Sutton G.G."/>
            <person name="Florea L."/>
            <person name="Halpern A.L."/>
            <person name="Mobarry C.M."/>
            <person name="Lippert R."/>
            <person name="Walenz B."/>
            <person name="Shatkay H."/>
            <person name="Dew I."/>
            <person name="Miller J.R."/>
            <person name="Flanigan M.J."/>
            <person name="Edwards N.J."/>
            <person name="Bolanos R."/>
            <person name="Fasulo D."/>
            <person name="Halldorsson B.V."/>
            <person name="Hannenhalli S."/>
            <person name="Turner R."/>
            <person name="Yooseph S."/>
            <person name="Lu F."/>
            <person name="Nusskern D.R."/>
            <person name="Shue B.C."/>
            <person name="Zheng X.H."/>
            <person name="Zhong F."/>
            <person name="Delcher A.L."/>
            <person name="Huson D.H."/>
            <person name="Kravitz S.A."/>
            <person name="Mouchard L."/>
            <person name="Reinert K."/>
            <person name="Remington K.A."/>
            <person name="Clark A.G."/>
            <person name="Waterman M.S."/>
            <person name="Eichler E.E."/>
            <person name="Adams M.D."/>
            <person name="Hunkapiller M.W."/>
            <person name="Myers E.W."/>
            <person name="Venter J.C."/>
        </authorList>
    </citation>
    <scope>NUCLEOTIDE SEQUENCE [LARGE SCALE GENOMIC DNA]</scope>
</reference>
<reference key="6">
    <citation type="journal article" date="2004" name="Genome Res.">
        <title>The status, quality, and expansion of the NIH full-length cDNA project: the Mammalian Gene Collection (MGC).</title>
        <authorList>
            <consortium name="The MGC Project Team"/>
        </authorList>
    </citation>
    <scope>NUCLEOTIDE SEQUENCE [LARGE SCALE MRNA] (ISOFORM 1)</scope>
    <source>
        <tissue>Eye</tissue>
    </source>
</reference>
<reference key="7">
    <citation type="journal article" date="2021" name="Nat. Commun.">
        <title>Deficiency of TMEM53 causes a previously unknown sclerosing bone disorder by dysregulation of BMP-SMAD signaling.</title>
        <authorList>
            <person name="Guo L."/>
            <person name="Iida A."/>
            <person name="Bhavani G.S."/>
            <person name="Gowrishankar K."/>
            <person name="Wang Z."/>
            <person name="Xue J.Y."/>
            <person name="Wang J."/>
            <person name="Miyake N."/>
            <person name="Matsumoto N."/>
            <person name="Hasegawa T."/>
            <person name="Iizuka Y."/>
            <person name="Matsuda M."/>
            <person name="Nakashima T."/>
            <person name="Takechi M."/>
            <person name="Iseki S."/>
            <person name="Yambe S."/>
            <person name="Nishimura G."/>
            <person name="Koseki H."/>
            <person name="Shukunami C."/>
            <person name="Girisha K.M."/>
            <person name="Ikegawa S."/>
        </authorList>
    </citation>
    <scope>INVOLVEMENT IN CTDI</scope>
    <scope>FUNCTION</scope>
    <scope>SUBCELLULAR LOCATION</scope>
    <scope>TISSUE SPECIFICITY</scope>
</reference>
<name>TMM53_HUMAN</name>
<proteinExistence type="evidence at protein level"/>
<accession>Q6P2H8</accession>
<accession>B4DKG0</accession>
<accession>Q5JPH2</accession>
<accession>Q6IA07</accession>
<accession>Q9H6E2</accession>
<feature type="chain" id="PRO_0000284118" description="Transmembrane protein 53">
    <location>
        <begin position="1"/>
        <end position="277"/>
    </location>
</feature>
<feature type="transmembrane region" description="Helical" evidence="1">
    <location>
        <begin position="171"/>
        <end position="191"/>
    </location>
</feature>
<feature type="splice variant" id="VSP_024446" description="In isoform 2." evidence="3 4">
    <location>
        <begin position="1"/>
        <end position="73"/>
    </location>
</feature>
<feature type="sequence conflict" description="In Ref. 1; BAB15317." evidence="6" ref="1">
    <original>F</original>
    <variation>L</variation>
    <location>
        <position position="177"/>
    </location>
</feature>
<feature type="sequence conflict" description="In Ref. 2; CAG33629." evidence="6" ref="2">
    <original>F</original>
    <variation>L</variation>
    <location>
        <position position="184"/>
    </location>
</feature>
<protein>
    <recommendedName>
        <fullName>Transmembrane protein 53</fullName>
    </recommendedName>
    <alternativeName>
        <fullName evidence="5">Nuclear envelope transmembrane protein 4</fullName>
    </alternativeName>
</protein>